<reference key="1">
    <citation type="journal article" date="2003" name="Science">
        <title>Role of mobile DNA in the evolution of vancomycin-resistant Enterococcus faecalis.</title>
        <authorList>
            <person name="Paulsen I.T."/>
            <person name="Banerjei L."/>
            <person name="Myers G.S.A."/>
            <person name="Nelson K.E."/>
            <person name="Seshadri R."/>
            <person name="Read T.D."/>
            <person name="Fouts D.E."/>
            <person name="Eisen J.A."/>
            <person name="Gill S.R."/>
            <person name="Heidelberg J.F."/>
            <person name="Tettelin H."/>
            <person name="Dodson R.J."/>
            <person name="Umayam L.A."/>
            <person name="Brinkac L.M."/>
            <person name="Beanan M.J."/>
            <person name="Daugherty S.C."/>
            <person name="DeBoy R.T."/>
            <person name="Durkin S.A."/>
            <person name="Kolonay J.F."/>
            <person name="Madupu R."/>
            <person name="Nelson W.C."/>
            <person name="Vamathevan J.J."/>
            <person name="Tran B."/>
            <person name="Upton J."/>
            <person name="Hansen T."/>
            <person name="Shetty J."/>
            <person name="Khouri H.M."/>
            <person name="Utterback T.R."/>
            <person name="Radune D."/>
            <person name="Ketchum K.A."/>
            <person name="Dougherty B.A."/>
            <person name="Fraser C.M."/>
        </authorList>
    </citation>
    <scope>NUCLEOTIDE SEQUENCE [LARGE SCALE GENOMIC DNA]</scope>
    <source>
        <strain>ATCC 700802 / V583</strain>
    </source>
</reference>
<evidence type="ECO:0000255" key="1">
    <source>
        <dbReference type="HAMAP-Rule" id="MF_00020"/>
    </source>
</evidence>
<protein>
    <recommendedName>
        <fullName evidence="1">Acetate kinase</fullName>
        <ecNumber evidence="1">2.7.2.1</ecNumber>
    </recommendedName>
    <alternativeName>
        <fullName evidence="1">Acetokinase</fullName>
    </alternativeName>
</protein>
<gene>
    <name evidence="1" type="primary">ackA</name>
    <name type="ordered locus">EF_1983</name>
</gene>
<sequence>MSKTIAINAGSSSLKWQLYQMPNEEVIAKGIVERIGLKDSIFTIKYGEGQKYEVIVDIDNHEVAVKMLLDQLIDLNILGSYDEITGVGHRVVAGGEEFKDSVVITDEVLEKIEALSELAPLHNPANAMGIKAFKHILPEIISVAVFDTSFHTTMPEHNYLYSVPREYYEKFAARKYGAHGTSHRYVSQRAAEMLGRPIEDLKIITCHLGNGASITAVDGGKSVDTSMGFTPLAGVTMGTRSGDVDASLLPYLMTKLGLTDVQDMVDILNKKSGLLGLTNGLSSDMRDIQSNLDKPEVQTAYNIFIDRIRKYIGSYVTVMNGVDAIVFTAGIGENAVGVRKDIIDGMTWFGCEIDDDKNNVHGEEAVISTDDSKIKLLLVPTDEELMIARDVERLK</sequence>
<dbReference type="EC" id="2.7.2.1" evidence="1"/>
<dbReference type="EMBL" id="AE016830">
    <property type="protein sequence ID" value="AAO81729.1"/>
    <property type="molecule type" value="Genomic_DNA"/>
</dbReference>
<dbReference type="RefSeq" id="NP_815659.1">
    <property type="nucleotide sequence ID" value="NC_004668.1"/>
</dbReference>
<dbReference type="RefSeq" id="WP_002357064.1">
    <property type="nucleotide sequence ID" value="NZ_KE136528.1"/>
</dbReference>
<dbReference type="SMR" id="Q833H0"/>
<dbReference type="STRING" id="226185.EF_1983"/>
<dbReference type="EnsemblBacteria" id="AAO81729">
    <property type="protein sequence ID" value="AAO81729"/>
    <property type="gene ID" value="EF_1983"/>
</dbReference>
<dbReference type="KEGG" id="efa:EF1983"/>
<dbReference type="PATRIC" id="fig|226185.45.peg.1544"/>
<dbReference type="eggNOG" id="COG0282">
    <property type="taxonomic scope" value="Bacteria"/>
</dbReference>
<dbReference type="HOGENOM" id="CLU_020352_0_1_9"/>
<dbReference type="SABIO-RK" id="Q833H0"/>
<dbReference type="UniPathway" id="UPA00340">
    <property type="reaction ID" value="UER00458"/>
</dbReference>
<dbReference type="Proteomes" id="UP000001415">
    <property type="component" value="Chromosome"/>
</dbReference>
<dbReference type="GO" id="GO:0005737">
    <property type="term" value="C:cytoplasm"/>
    <property type="evidence" value="ECO:0007669"/>
    <property type="project" value="UniProtKB-SubCell"/>
</dbReference>
<dbReference type="GO" id="GO:0008776">
    <property type="term" value="F:acetate kinase activity"/>
    <property type="evidence" value="ECO:0007669"/>
    <property type="project" value="UniProtKB-UniRule"/>
</dbReference>
<dbReference type="GO" id="GO:0005524">
    <property type="term" value="F:ATP binding"/>
    <property type="evidence" value="ECO:0007669"/>
    <property type="project" value="UniProtKB-KW"/>
</dbReference>
<dbReference type="GO" id="GO:0000287">
    <property type="term" value="F:magnesium ion binding"/>
    <property type="evidence" value="ECO:0007669"/>
    <property type="project" value="UniProtKB-UniRule"/>
</dbReference>
<dbReference type="GO" id="GO:0006083">
    <property type="term" value="P:acetate metabolic process"/>
    <property type="evidence" value="ECO:0007669"/>
    <property type="project" value="TreeGrafter"/>
</dbReference>
<dbReference type="GO" id="GO:0006085">
    <property type="term" value="P:acetyl-CoA biosynthetic process"/>
    <property type="evidence" value="ECO:0007669"/>
    <property type="project" value="UniProtKB-UniRule"/>
</dbReference>
<dbReference type="CDD" id="cd24010">
    <property type="entry name" value="ASKHA_NBD_AcK_PK"/>
    <property type="match status" value="1"/>
</dbReference>
<dbReference type="Gene3D" id="3.30.420.40">
    <property type="match status" value="2"/>
</dbReference>
<dbReference type="HAMAP" id="MF_00020">
    <property type="entry name" value="Acetate_kinase"/>
    <property type="match status" value="1"/>
</dbReference>
<dbReference type="InterPro" id="IPR004372">
    <property type="entry name" value="Ac/propionate_kinase"/>
</dbReference>
<dbReference type="InterPro" id="IPR000890">
    <property type="entry name" value="Aliphatic_acid_kin_short-chain"/>
</dbReference>
<dbReference type="InterPro" id="IPR023865">
    <property type="entry name" value="Aliphatic_acid_kinase_CS"/>
</dbReference>
<dbReference type="InterPro" id="IPR043129">
    <property type="entry name" value="ATPase_NBD"/>
</dbReference>
<dbReference type="NCBIfam" id="TIGR00016">
    <property type="entry name" value="ackA"/>
    <property type="match status" value="1"/>
</dbReference>
<dbReference type="PANTHER" id="PTHR21060">
    <property type="entry name" value="ACETATE KINASE"/>
    <property type="match status" value="1"/>
</dbReference>
<dbReference type="PANTHER" id="PTHR21060:SF15">
    <property type="entry name" value="ACETATE KINASE-RELATED"/>
    <property type="match status" value="1"/>
</dbReference>
<dbReference type="Pfam" id="PF00871">
    <property type="entry name" value="Acetate_kinase"/>
    <property type="match status" value="1"/>
</dbReference>
<dbReference type="PIRSF" id="PIRSF000722">
    <property type="entry name" value="Acetate_prop_kin"/>
    <property type="match status" value="1"/>
</dbReference>
<dbReference type="PRINTS" id="PR00471">
    <property type="entry name" value="ACETATEKNASE"/>
</dbReference>
<dbReference type="SUPFAM" id="SSF53067">
    <property type="entry name" value="Actin-like ATPase domain"/>
    <property type="match status" value="2"/>
</dbReference>
<dbReference type="PROSITE" id="PS01075">
    <property type="entry name" value="ACETATE_KINASE_1"/>
    <property type="match status" value="1"/>
</dbReference>
<dbReference type="PROSITE" id="PS01076">
    <property type="entry name" value="ACETATE_KINASE_2"/>
    <property type="match status" value="1"/>
</dbReference>
<organism>
    <name type="scientific">Enterococcus faecalis (strain ATCC 700802 / V583)</name>
    <dbReference type="NCBI Taxonomy" id="226185"/>
    <lineage>
        <taxon>Bacteria</taxon>
        <taxon>Bacillati</taxon>
        <taxon>Bacillota</taxon>
        <taxon>Bacilli</taxon>
        <taxon>Lactobacillales</taxon>
        <taxon>Enterococcaceae</taxon>
        <taxon>Enterococcus</taxon>
    </lineage>
</organism>
<feature type="chain" id="PRO_0000107560" description="Acetate kinase">
    <location>
        <begin position="1"/>
        <end position="395"/>
    </location>
</feature>
<feature type="active site" description="Proton donor/acceptor" evidence="1">
    <location>
        <position position="147"/>
    </location>
</feature>
<feature type="binding site" evidence="1">
    <location>
        <position position="8"/>
    </location>
    <ligand>
        <name>Mg(2+)</name>
        <dbReference type="ChEBI" id="CHEBI:18420"/>
    </ligand>
</feature>
<feature type="binding site" evidence="1">
    <location>
        <position position="15"/>
    </location>
    <ligand>
        <name>ATP</name>
        <dbReference type="ChEBI" id="CHEBI:30616"/>
    </ligand>
</feature>
<feature type="binding site" evidence="1">
    <location>
        <position position="90"/>
    </location>
    <ligand>
        <name>substrate</name>
    </ligand>
</feature>
<feature type="binding site" evidence="1">
    <location>
        <begin position="207"/>
        <end position="211"/>
    </location>
    <ligand>
        <name>ATP</name>
        <dbReference type="ChEBI" id="CHEBI:30616"/>
    </ligand>
</feature>
<feature type="binding site" evidence="1">
    <location>
        <begin position="284"/>
        <end position="286"/>
    </location>
    <ligand>
        <name>ATP</name>
        <dbReference type="ChEBI" id="CHEBI:30616"/>
    </ligand>
</feature>
<feature type="binding site" evidence="1">
    <location>
        <begin position="330"/>
        <end position="334"/>
    </location>
    <ligand>
        <name>ATP</name>
        <dbReference type="ChEBI" id="CHEBI:30616"/>
    </ligand>
</feature>
<feature type="binding site" evidence="1">
    <location>
        <position position="383"/>
    </location>
    <ligand>
        <name>Mg(2+)</name>
        <dbReference type="ChEBI" id="CHEBI:18420"/>
    </ligand>
</feature>
<feature type="site" description="Transition state stabilizer" evidence="1">
    <location>
        <position position="179"/>
    </location>
</feature>
<feature type="site" description="Transition state stabilizer" evidence="1">
    <location>
        <position position="240"/>
    </location>
</feature>
<keyword id="KW-0067">ATP-binding</keyword>
<keyword id="KW-0963">Cytoplasm</keyword>
<keyword id="KW-0418">Kinase</keyword>
<keyword id="KW-0460">Magnesium</keyword>
<keyword id="KW-0479">Metal-binding</keyword>
<keyword id="KW-0547">Nucleotide-binding</keyword>
<keyword id="KW-1185">Reference proteome</keyword>
<keyword id="KW-0808">Transferase</keyword>
<accession>Q833H0</accession>
<comment type="function">
    <text evidence="1">Catalyzes the formation of acetyl phosphate from acetate and ATP. Can also catalyze the reverse reaction.</text>
</comment>
<comment type="catalytic activity">
    <reaction evidence="1">
        <text>acetate + ATP = acetyl phosphate + ADP</text>
        <dbReference type="Rhea" id="RHEA:11352"/>
        <dbReference type="ChEBI" id="CHEBI:22191"/>
        <dbReference type="ChEBI" id="CHEBI:30089"/>
        <dbReference type="ChEBI" id="CHEBI:30616"/>
        <dbReference type="ChEBI" id="CHEBI:456216"/>
        <dbReference type="EC" id="2.7.2.1"/>
    </reaction>
</comment>
<comment type="cofactor">
    <cofactor evidence="1">
        <name>Mg(2+)</name>
        <dbReference type="ChEBI" id="CHEBI:18420"/>
    </cofactor>
    <cofactor evidence="1">
        <name>Mn(2+)</name>
        <dbReference type="ChEBI" id="CHEBI:29035"/>
    </cofactor>
    <text evidence="1">Mg(2+). Can also accept Mn(2+).</text>
</comment>
<comment type="pathway">
    <text evidence="1">Metabolic intermediate biosynthesis; acetyl-CoA biosynthesis; acetyl-CoA from acetate: step 1/2.</text>
</comment>
<comment type="subunit">
    <text evidence="1">Homodimer.</text>
</comment>
<comment type="subcellular location">
    <subcellularLocation>
        <location evidence="1">Cytoplasm</location>
    </subcellularLocation>
</comment>
<comment type="similarity">
    <text evidence="1">Belongs to the acetokinase family.</text>
</comment>
<proteinExistence type="inferred from homology"/>
<name>ACKA_ENTFA</name>